<gene>
    <name type="primary">PLB1</name>
    <name type="synonym">PLB</name>
    <name type="ordered locus">CNM00920</name>
</gene>
<keyword id="KW-0325">Glycoprotein</keyword>
<keyword id="KW-0378">Hydrolase</keyword>
<keyword id="KW-0442">Lipid degradation</keyword>
<keyword id="KW-0443">Lipid metabolism</keyword>
<keyword id="KW-1185">Reference proteome</keyword>
<keyword id="KW-0964">Secreted</keyword>
<keyword id="KW-0732">Signal</keyword>
<organism>
    <name type="scientific">Cryptococcus neoformans var. neoformans serotype D (strain JEC21 / ATCC MYA-565)</name>
    <name type="common">Filobasidiella neoformans</name>
    <dbReference type="NCBI Taxonomy" id="214684"/>
    <lineage>
        <taxon>Eukaryota</taxon>
        <taxon>Fungi</taxon>
        <taxon>Dikarya</taxon>
        <taxon>Basidiomycota</taxon>
        <taxon>Agaricomycotina</taxon>
        <taxon>Tremellomycetes</taxon>
        <taxon>Tremellales</taxon>
        <taxon>Cryptococcaceae</taxon>
        <taxon>Cryptococcus</taxon>
        <taxon>Cryptococcus neoformans species complex</taxon>
    </lineage>
</organism>
<protein>
    <recommendedName>
        <fullName>Phospholipase B</fullName>
        <ecNumber>3.1.1.5</ecNumber>
    </recommendedName>
    <alternativeName>
        <fullName>Lysophospholipase</fullName>
    </alternativeName>
</protein>
<reference key="1">
    <citation type="journal article" date="2005" name="Science">
        <title>The genome of the basidiomycetous yeast and human pathogen Cryptococcus neoformans.</title>
        <authorList>
            <person name="Loftus B.J."/>
            <person name="Fung E."/>
            <person name="Roncaglia P."/>
            <person name="Rowley D."/>
            <person name="Amedeo P."/>
            <person name="Bruno D."/>
            <person name="Vamathevan J."/>
            <person name="Miranda M."/>
            <person name="Anderson I.J."/>
            <person name="Fraser J.A."/>
            <person name="Allen J.E."/>
            <person name="Bosdet I.E."/>
            <person name="Brent M.R."/>
            <person name="Chiu R."/>
            <person name="Doering T.L."/>
            <person name="Donlin M.J."/>
            <person name="D'Souza C.A."/>
            <person name="Fox D.S."/>
            <person name="Grinberg V."/>
            <person name="Fu J."/>
            <person name="Fukushima M."/>
            <person name="Haas B.J."/>
            <person name="Huang J.C."/>
            <person name="Janbon G."/>
            <person name="Jones S.J.M."/>
            <person name="Koo H.L."/>
            <person name="Krzywinski M.I."/>
            <person name="Kwon-Chung K.J."/>
            <person name="Lengeler K.B."/>
            <person name="Maiti R."/>
            <person name="Marra M.A."/>
            <person name="Marra R.E."/>
            <person name="Mathewson C.A."/>
            <person name="Mitchell T.G."/>
            <person name="Pertea M."/>
            <person name="Riggs F.R."/>
            <person name="Salzberg S.L."/>
            <person name="Schein J.E."/>
            <person name="Shvartsbeyn A."/>
            <person name="Shin H."/>
            <person name="Shumway M."/>
            <person name="Specht C.A."/>
            <person name="Suh B.B."/>
            <person name="Tenney A."/>
            <person name="Utterback T.R."/>
            <person name="Wickes B.L."/>
            <person name="Wortman J.R."/>
            <person name="Wye N.H."/>
            <person name="Kronstad J.W."/>
            <person name="Lodge J.K."/>
            <person name="Heitman J."/>
            <person name="Davis R.W."/>
            <person name="Fraser C.M."/>
            <person name="Hyman R.W."/>
        </authorList>
    </citation>
    <scope>NUCLEOTIDE SEQUENCE [LARGE SCALE GENOMIC DNA]</scope>
    <source>
        <strain>JEC21 / ATCC MYA-565</strain>
    </source>
</reference>
<dbReference type="EC" id="3.1.1.5"/>
<dbReference type="EMBL" id="AE017353">
    <property type="protein sequence ID" value="AAW46882.2"/>
    <property type="molecule type" value="Genomic_DNA"/>
</dbReference>
<dbReference type="RefSeq" id="XP_568399.1">
    <property type="nucleotide sequence ID" value="XM_568399.1"/>
</dbReference>
<dbReference type="SMR" id="P0CP74"/>
<dbReference type="FunCoup" id="P0CP74">
    <property type="interactions" value="202"/>
</dbReference>
<dbReference type="STRING" id="214684.P0CP74"/>
<dbReference type="GlyCosmos" id="P0CP74">
    <property type="glycosylation" value="17 sites, No reported glycans"/>
</dbReference>
<dbReference type="PaxDb" id="214684-P0CP74"/>
<dbReference type="eggNOG" id="KOG1325">
    <property type="taxonomic scope" value="Eukaryota"/>
</dbReference>
<dbReference type="HOGENOM" id="CLU_014602_0_0_1"/>
<dbReference type="InParanoid" id="P0CP74"/>
<dbReference type="Proteomes" id="UP000002149">
    <property type="component" value="Chromosome 13"/>
</dbReference>
<dbReference type="GO" id="GO:0005829">
    <property type="term" value="C:cytosol"/>
    <property type="evidence" value="ECO:0000318"/>
    <property type="project" value="GO_Central"/>
</dbReference>
<dbReference type="GO" id="GO:0005576">
    <property type="term" value="C:extracellular region"/>
    <property type="evidence" value="ECO:0007669"/>
    <property type="project" value="UniProtKB-SubCell"/>
</dbReference>
<dbReference type="GO" id="GO:0004622">
    <property type="term" value="F:lysophospholipase activity"/>
    <property type="evidence" value="ECO:0007669"/>
    <property type="project" value="UniProtKB-EC"/>
</dbReference>
<dbReference type="GO" id="GO:0004623">
    <property type="term" value="F:phospholipase A2 activity"/>
    <property type="evidence" value="ECO:0000318"/>
    <property type="project" value="GO_Central"/>
</dbReference>
<dbReference type="GO" id="GO:0046475">
    <property type="term" value="P:glycerophospholipid catabolic process"/>
    <property type="evidence" value="ECO:0000318"/>
    <property type="project" value="GO_Central"/>
</dbReference>
<dbReference type="CDD" id="cd07203">
    <property type="entry name" value="cPLA2_Fungal_PLB"/>
    <property type="match status" value="1"/>
</dbReference>
<dbReference type="FunFam" id="3.40.1090.10:FF:000035">
    <property type="entry name" value="Lysophospholipase"/>
    <property type="match status" value="1"/>
</dbReference>
<dbReference type="Gene3D" id="3.40.1090.10">
    <property type="entry name" value="Cytosolic phospholipase A2 catalytic domain"/>
    <property type="match status" value="1"/>
</dbReference>
<dbReference type="InterPro" id="IPR016035">
    <property type="entry name" value="Acyl_Trfase/lysoPLipase"/>
</dbReference>
<dbReference type="InterPro" id="IPR002642">
    <property type="entry name" value="LysoPLipase_cat_dom"/>
</dbReference>
<dbReference type="PANTHER" id="PTHR10728">
    <property type="entry name" value="CYTOSOLIC PHOSPHOLIPASE A2"/>
    <property type="match status" value="1"/>
</dbReference>
<dbReference type="PANTHER" id="PTHR10728:SF33">
    <property type="entry name" value="LYSOPHOSPHOLIPASE 1-RELATED"/>
    <property type="match status" value="1"/>
</dbReference>
<dbReference type="Pfam" id="PF01735">
    <property type="entry name" value="PLA2_B"/>
    <property type="match status" value="1"/>
</dbReference>
<dbReference type="SMART" id="SM00022">
    <property type="entry name" value="PLAc"/>
    <property type="match status" value="1"/>
</dbReference>
<dbReference type="SUPFAM" id="SSF52151">
    <property type="entry name" value="FabD/lysophospholipase-like"/>
    <property type="match status" value="1"/>
</dbReference>
<dbReference type="PROSITE" id="PS51210">
    <property type="entry name" value="PLA2C"/>
    <property type="match status" value="1"/>
</dbReference>
<accession>P0CP74</accession>
<accession>Q55ID9</accession>
<accession>Q5K7X8</accession>
<accession>Q9P8L1</accession>
<comment type="function">
    <text evidence="1">Exhibits phospholipase B (PLB), lysophospholipase (LPL) and lysophospholipase/transacylase (LPTA) activities.</text>
</comment>
<comment type="catalytic activity">
    <reaction>
        <text>a 1-acyl-sn-glycero-3-phosphocholine + H2O = sn-glycerol 3-phosphocholine + a fatty acid + H(+)</text>
        <dbReference type="Rhea" id="RHEA:15177"/>
        <dbReference type="ChEBI" id="CHEBI:15377"/>
        <dbReference type="ChEBI" id="CHEBI:15378"/>
        <dbReference type="ChEBI" id="CHEBI:16870"/>
        <dbReference type="ChEBI" id="CHEBI:28868"/>
        <dbReference type="ChEBI" id="CHEBI:58168"/>
        <dbReference type="EC" id="3.1.1.5"/>
    </reaction>
</comment>
<comment type="subcellular location">
    <subcellularLocation>
        <location evidence="1">Secreted</location>
    </subcellularLocation>
</comment>
<comment type="PTM">
    <text>N-glycosylated.</text>
</comment>
<comment type="similarity">
    <text evidence="4">Belongs to the lysophospholipase family.</text>
</comment>
<name>PLB1_CRYNJ</name>
<evidence type="ECO:0000250" key="1"/>
<evidence type="ECO:0000255" key="2"/>
<evidence type="ECO:0000255" key="3">
    <source>
        <dbReference type="PROSITE-ProRule" id="PRU00555"/>
    </source>
</evidence>
<evidence type="ECO:0000305" key="4"/>
<proteinExistence type="inferred from homology"/>
<sequence length="634" mass="68167">MSIITTAFALSLLATTAFAVPPETPRIELQAERGLGDQSYAPWQVDCPSNVTWIRNATTGLGTGERAYIEAREKLVQPAIEQMMAARGLETPPRTPVIGVALAGGGYRAMLTGLGGIMGMMNESTEASQSETGGWLDGVSYWSGLSGGSWATGSFMSNGGQLPTTLLENLWNIDSNLVFPDDGKLSFYTNLYTETNAKSDLGFPVQITDIWGLAIGSHVLPEPYQLSNTPNLTFSSLPSVVAALGNASLPMPIIVAAEREAGELVIAENATVWEFTPYEFGSWAFGSQYKSPGAFTPIEYLGTSVDDGSPNGTCWKGFDQLSFVMGTSATLFNGAFLELNGTDSGLLTNLITAFLADLGEDQADISRIPNSFSNYNSGENPIYNLTYITLVDAGETNQNIPLEPLLVPTRDVDAIVAFDSSYDSDYIWPNGTALRTTYERAKILAEHENTRVLMPEVPSMNGFVNGGYNSRPTFFGCNDTTTPVIIYIPSYPWSFAANTSTYQLSYENNEANEMLLNGMRSLTLNHSVPTWPTCFACALTDRSFMYTSENRSTTCQECFDTWCWAGDDNTTEPANYEPVINSVPPWLIANNLSIGMADAPGSNESTAGTASSGAAKMGVGMGMVALTAGLGLML</sequence>
<feature type="signal peptide" evidence="2">
    <location>
        <begin position="1"/>
        <end position="19"/>
    </location>
</feature>
<feature type="chain" id="PRO_0000024635" description="Phospholipase B">
    <location>
        <begin position="20"/>
        <end position="634"/>
    </location>
</feature>
<feature type="domain" description="PLA2c" evidence="3">
    <location>
        <begin position="46"/>
        <end position="569"/>
    </location>
</feature>
<feature type="glycosylation site" description="N-linked (GlcNAc...) asparagine" evidence="2">
    <location>
        <position position="50"/>
    </location>
</feature>
<feature type="glycosylation site" description="N-linked (GlcNAc...) asparagine" evidence="2">
    <location>
        <position position="56"/>
    </location>
</feature>
<feature type="glycosylation site" description="N-linked (GlcNAc...) asparagine" evidence="2">
    <location>
        <position position="122"/>
    </location>
</feature>
<feature type="glycosylation site" description="N-linked (GlcNAc...) asparagine" evidence="2">
    <location>
        <position position="231"/>
    </location>
</feature>
<feature type="glycosylation site" description="N-linked (GlcNAc...) asparagine" evidence="2">
    <location>
        <position position="246"/>
    </location>
</feature>
<feature type="glycosylation site" description="N-linked (GlcNAc...) asparagine" evidence="2">
    <location>
        <position position="269"/>
    </location>
</feature>
<feature type="glycosylation site" description="N-linked (GlcNAc...) asparagine" evidence="2">
    <location>
        <position position="311"/>
    </location>
</feature>
<feature type="glycosylation site" description="N-linked (GlcNAc...) asparagine" evidence="2">
    <location>
        <position position="340"/>
    </location>
</feature>
<feature type="glycosylation site" description="N-linked (GlcNAc...) asparagine" evidence="2">
    <location>
        <position position="384"/>
    </location>
</feature>
<feature type="glycosylation site" description="N-linked (GlcNAc...) asparagine" evidence="2">
    <location>
        <position position="430"/>
    </location>
</feature>
<feature type="glycosylation site" description="N-linked (GlcNAc...) asparagine" evidence="2">
    <location>
        <position position="478"/>
    </location>
</feature>
<feature type="glycosylation site" description="N-linked (GlcNAc...) asparagine" evidence="2">
    <location>
        <position position="498"/>
    </location>
</feature>
<feature type="glycosylation site" description="N-linked (GlcNAc...) asparagine" evidence="2">
    <location>
        <position position="525"/>
    </location>
</feature>
<feature type="glycosylation site" description="N-linked (GlcNAc...) asparagine" evidence="2">
    <location>
        <position position="550"/>
    </location>
</feature>
<feature type="glycosylation site" description="N-linked (GlcNAc...) asparagine" evidence="2">
    <location>
        <position position="569"/>
    </location>
</feature>
<feature type="glycosylation site" description="N-linked (GlcNAc...) asparagine" evidence="2">
    <location>
        <position position="591"/>
    </location>
</feature>
<feature type="glycosylation site" description="N-linked (GlcNAc...) asparagine" evidence="2">
    <location>
        <position position="603"/>
    </location>
</feature>